<comment type="function">
    <text evidence="3">Odorant receptor.</text>
</comment>
<comment type="subcellular location">
    <subcellularLocation>
        <location>Cell membrane</location>
        <topology>Multi-pass membrane protein</topology>
    </subcellularLocation>
</comment>
<comment type="similarity">
    <text evidence="2">Belongs to the G-protein coupled receptor 1 family.</text>
</comment>
<comment type="sequence caution" evidence="3">
    <conflict type="erroneous initiation">
        <sequence resource="EMBL-CDS" id="DAA04748"/>
    </conflict>
</comment>
<comment type="online information" name="Human Olfactory Receptor Data Exploratorium (HORDE)">
    <link uri="http://genome.weizmann.ac.il/horde/card/index/symbol:OR4C5"/>
</comment>
<dbReference type="EMBL" id="AB065910">
    <property type="protein sequence ID" value="BAC06125.1"/>
    <property type="molecule type" value="Genomic_DNA"/>
</dbReference>
<dbReference type="EMBL" id="BK004350">
    <property type="protein sequence ID" value="DAA04748.1"/>
    <property type="status" value="ALT_INIT"/>
    <property type="molecule type" value="Genomic_DNA"/>
</dbReference>
<dbReference type="CCDS" id="CCDS86201.1"/>
<dbReference type="RefSeq" id="NP_001335152.1">
    <property type="nucleotide sequence ID" value="NM_001348223.2"/>
</dbReference>
<dbReference type="SMR" id="Q8NGB2"/>
<dbReference type="FunCoup" id="Q8NGB2">
    <property type="interactions" value="416"/>
</dbReference>
<dbReference type="STRING" id="9606.ENSP00000321338"/>
<dbReference type="GlyCosmos" id="Q8NGB2">
    <property type="glycosylation" value="1 site, No reported glycans"/>
</dbReference>
<dbReference type="GlyGen" id="Q8NGB2">
    <property type="glycosylation" value="1 site"/>
</dbReference>
<dbReference type="BioMuta" id="OR4C5"/>
<dbReference type="DMDM" id="74760242"/>
<dbReference type="PaxDb" id="9606-ENSP00000321338"/>
<dbReference type="ProteomicsDB" id="73465"/>
<dbReference type="Antibodypedia" id="72043">
    <property type="antibodies" value="6 antibodies from 6 providers"/>
</dbReference>
<dbReference type="DNASU" id="79346"/>
<dbReference type="Ensembl" id="ENST00000319813.3">
    <property type="protein sequence ID" value="ENSP00000321338.3"/>
    <property type="gene ID" value="ENSG00000176540.3"/>
</dbReference>
<dbReference type="GeneID" id="79346"/>
<dbReference type="KEGG" id="hsa:79346"/>
<dbReference type="MANE-Select" id="ENST00000319813.3">
    <property type="protein sequence ID" value="ENSP00000321338.3"/>
    <property type="RefSeq nucleotide sequence ID" value="NM_001348223.2"/>
    <property type="RefSeq protein sequence ID" value="NP_001335152.1"/>
</dbReference>
<dbReference type="UCSC" id="uc058bja.1">
    <property type="organism name" value="human"/>
</dbReference>
<dbReference type="AGR" id="HGNC:14702"/>
<dbReference type="CTD" id="79346"/>
<dbReference type="DisGeNET" id="79346"/>
<dbReference type="GeneCards" id="OR4C5"/>
<dbReference type="HGNC" id="HGNC:14702">
    <property type="gene designation" value="OR4C5"/>
</dbReference>
<dbReference type="HPA" id="ENSG00000176540">
    <property type="expression patterns" value="Not detected"/>
</dbReference>
<dbReference type="neXtProt" id="NX_Q8NGB2"/>
<dbReference type="OpenTargets" id="ENSG00000176540"/>
<dbReference type="VEuPathDB" id="HostDB:ENSG00000176540"/>
<dbReference type="eggNOG" id="ENOG502T9JX">
    <property type="taxonomic scope" value="Eukaryota"/>
</dbReference>
<dbReference type="GeneTree" id="ENSGT00940000161803"/>
<dbReference type="HOGENOM" id="CLU_012526_8_1_1"/>
<dbReference type="InParanoid" id="Q8NGB2"/>
<dbReference type="OMA" id="YYLITMN"/>
<dbReference type="OrthoDB" id="10017003at2759"/>
<dbReference type="PAN-GO" id="Q8NGB2">
    <property type="GO annotations" value="2 GO annotations based on evolutionary models"/>
</dbReference>
<dbReference type="PhylomeDB" id="Q8NGB2"/>
<dbReference type="TreeFam" id="TF337350"/>
<dbReference type="PathwayCommons" id="Q8NGB2"/>
<dbReference type="Reactome" id="R-HSA-9752946">
    <property type="pathway name" value="Expression and translocation of olfactory receptors"/>
</dbReference>
<dbReference type="BioGRID-ORCS" id="79346">
    <property type="hits" value="0 hits in 94 CRISPR screens"/>
</dbReference>
<dbReference type="GenomeRNAi" id="79346"/>
<dbReference type="Pharos" id="Q8NGB2">
    <property type="development level" value="Tdark"/>
</dbReference>
<dbReference type="PRO" id="PR:Q8NGB2"/>
<dbReference type="Proteomes" id="UP000005640">
    <property type="component" value="Chromosome 11"/>
</dbReference>
<dbReference type="RNAct" id="Q8NGB2">
    <property type="molecule type" value="protein"/>
</dbReference>
<dbReference type="GO" id="GO:0005886">
    <property type="term" value="C:plasma membrane"/>
    <property type="evidence" value="ECO:0000318"/>
    <property type="project" value="GO_Central"/>
</dbReference>
<dbReference type="GO" id="GO:0004930">
    <property type="term" value="F:G protein-coupled receptor activity"/>
    <property type="evidence" value="ECO:0007669"/>
    <property type="project" value="UniProtKB-KW"/>
</dbReference>
<dbReference type="GO" id="GO:0004984">
    <property type="term" value="F:olfactory receptor activity"/>
    <property type="evidence" value="ECO:0000318"/>
    <property type="project" value="GO_Central"/>
</dbReference>
<dbReference type="CDD" id="cd15939">
    <property type="entry name" value="7tmA_OR4A-like"/>
    <property type="match status" value="1"/>
</dbReference>
<dbReference type="FunFam" id="1.10.1220.70:FF:000001">
    <property type="entry name" value="Olfactory receptor"/>
    <property type="match status" value="1"/>
</dbReference>
<dbReference type="FunFam" id="1.20.1070.10:FF:000007">
    <property type="entry name" value="Olfactory receptor"/>
    <property type="match status" value="1"/>
</dbReference>
<dbReference type="Gene3D" id="1.20.1070.10">
    <property type="entry name" value="Rhodopsin 7-helix transmembrane proteins"/>
    <property type="match status" value="1"/>
</dbReference>
<dbReference type="InterPro" id="IPR000276">
    <property type="entry name" value="GPCR_Rhodpsn"/>
</dbReference>
<dbReference type="InterPro" id="IPR017452">
    <property type="entry name" value="GPCR_Rhodpsn_7TM"/>
</dbReference>
<dbReference type="InterPro" id="IPR000725">
    <property type="entry name" value="Olfact_rcpt"/>
</dbReference>
<dbReference type="InterPro" id="IPR050427">
    <property type="entry name" value="Olfactory_Receptors"/>
</dbReference>
<dbReference type="PANTHER" id="PTHR48002">
    <property type="entry name" value="OLFACTORY RECEPTOR"/>
    <property type="match status" value="1"/>
</dbReference>
<dbReference type="Pfam" id="PF13853">
    <property type="entry name" value="7tm_4"/>
    <property type="match status" value="1"/>
</dbReference>
<dbReference type="PRINTS" id="PR00237">
    <property type="entry name" value="GPCRRHODOPSN"/>
</dbReference>
<dbReference type="PRINTS" id="PR00245">
    <property type="entry name" value="OLFACTORYR"/>
</dbReference>
<dbReference type="SUPFAM" id="SSF81321">
    <property type="entry name" value="Family A G protein-coupled receptor-like"/>
    <property type="match status" value="1"/>
</dbReference>
<dbReference type="PROSITE" id="PS50262">
    <property type="entry name" value="G_PROTEIN_RECEP_F1_2"/>
    <property type="match status" value="1"/>
</dbReference>
<name>OR4C5_HUMAN</name>
<protein>
    <recommendedName>
        <fullName>Olfactory receptor 4C5</fullName>
    </recommendedName>
    <alternativeName>
        <fullName>Olfactory receptor OR11-99</fullName>
    </alternativeName>
</protein>
<organism>
    <name type="scientific">Homo sapiens</name>
    <name type="common">Human</name>
    <dbReference type="NCBI Taxonomy" id="9606"/>
    <lineage>
        <taxon>Eukaryota</taxon>
        <taxon>Metazoa</taxon>
        <taxon>Chordata</taxon>
        <taxon>Craniata</taxon>
        <taxon>Vertebrata</taxon>
        <taxon>Euteleostomi</taxon>
        <taxon>Mammalia</taxon>
        <taxon>Eutheria</taxon>
        <taxon>Euarchontoglires</taxon>
        <taxon>Primates</taxon>
        <taxon>Haplorrhini</taxon>
        <taxon>Catarrhini</taxon>
        <taxon>Hominidae</taxon>
        <taxon>Homo</taxon>
    </lineage>
</organism>
<feature type="chain" id="PRO_0000150530" description="Olfactory receptor 4C5">
    <location>
        <begin position="1"/>
        <end position="326"/>
    </location>
</feature>
<feature type="topological domain" description="Extracellular" evidence="1">
    <location>
        <begin position="1"/>
        <end position="46"/>
    </location>
</feature>
<feature type="transmembrane region" description="Helical; Name=1" evidence="1">
    <location>
        <begin position="47"/>
        <end position="70"/>
    </location>
</feature>
<feature type="topological domain" description="Cytoplasmic" evidence="1">
    <location>
        <begin position="71"/>
        <end position="78"/>
    </location>
</feature>
<feature type="transmembrane region" description="Helical; Name=2" evidence="1">
    <location>
        <begin position="79"/>
        <end position="100"/>
    </location>
</feature>
<feature type="topological domain" description="Extracellular" evidence="1">
    <location>
        <begin position="101"/>
        <end position="121"/>
    </location>
</feature>
<feature type="transmembrane region" description="Helical; Name=3" evidence="1">
    <location>
        <begin position="122"/>
        <end position="141"/>
    </location>
</feature>
<feature type="topological domain" description="Cytoplasmic" evidence="1">
    <location>
        <begin position="142"/>
        <end position="160"/>
    </location>
</feature>
<feature type="transmembrane region" description="Helical; Name=4" evidence="1">
    <location>
        <begin position="161"/>
        <end position="179"/>
    </location>
</feature>
<feature type="topological domain" description="Extracellular" evidence="1">
    <location>
        <begin position="180"/>
        <end position="216"/>
    </location>
</feature>
<feature type="transmembrane region" description="Helical; Name=5" evidence="1">
    <location>
        <begin position="217"/>
        <end position="240"/>
    </location>
</feature>
<feature type="topological domain" description="Cytoplasmic" evidence="1">
    <location>
        <begin position="241"/>
        <end position="248"/>
    </location>
</feature>
<feature type="transmembrane region" description="Helical; Name=6" evidence="1">
    <location>
        <begin position="249"/>
        <end position="271"/>
    </location>
</feature>
<feature type="topological domain" description="Extracellular" evidence="1">
    <location>
        <begin position="272"/>
        <end position="282"/>
    </location>
</feature>
<feature type="transmembrane region" description="Helical; Name=7" evidence="1">
    <location>
        <begin position="283"/>
        <end position="302"/>
    </location>
</feature>
<feature type="topological domain" description="Cytoplasmic" evidence="1">
    <location>
        <begin position="303"/>
        <end position="326"/>
    </location>
</feature>
<feature type="glycosylation site" description="N-linked (GlcNAc...) asparagine" evidence="1">
    <location>
        <position position="29"/>
    </location>
</feature>
<feature type="disulfide bond" evidence="2">
    <location>
        <begin position="118"/>
        <end position="210"/>
    </location>
</feature>
<proteinExistence type="inferred from homology"/>
<gene>
    <name type="primary">OR4C5</name>
</gene>
<sequence>MYVSNCNPCAIHRKINYPNTKLDFEQVNNITEFILLGLTQNAEAQKLLFAVFTLIYFLTMVDNLIIVVTITTSPALDSPVYFFLSFFSFIDGCSSSTMAPKMIFDLLTEKKTISFSGCMTQLFVEHFFGGVEIILLVVMAYDCYVAICKPLYYLITMNRQVCGLLVAMAWVGGFLHALIQMLLIVWLPFCGPNVIDHFICDLFPLLKLSCTDTHVFGLFVAANSGLMCMLIFSILITSYVLILCSQRKALSTCAFHITVVVLFFVPCILVYLRPMITFPIDKAVSVFYTVVTPMLNPLIYTLRNTEVKNAMKQLWSQIIWGNNLCD</sequence>
<accession>Q8NGB2</accession>
<accession>Q6IFB2</accession>
<keyword id="KW-1003">Cell membrane</keyword>
<keyword id="KW-1015">Disulfide bond</keyword>
<keyword id="KW-0297">G-protein coupled receptor</keyword>
<keyword id="KW-0325">Glycoprotein</keyword>
<keyword id="KW-0472">Membrane</keyword>
<keyword id="KW-0552">Olfaction</keyword>
<keyword id="KW-0675">Receptor</keyword>
<keyword id="KW-1185">Reference proteome</keyword>
<keyword id="KW-0716">Sensory transduction</keyword>
<keyword id="KW-0807">Transducer</keyword>
<keyword id="KW-0812">Transmembrane</keyword>
<keyword id="KW-1133">Transmembrane helix</keyword>
<evidence type="ECO:0000255" key="1"/>
<evidence type="ECO:0000255" key="2">
    <source>
        <dbReference type="PROSITE-ProRule" id="PRU00521"/>
    </source>
</evidence>
<evidence type="ECO:0000305" key="3"/>
<reference key="1">
    <citation type="submission" date="2001-07" db="EMBL/GenBank/DDBJ databases">
        <title>Genome-wide discovery and analysis of human seven transmembrane helix receptor genes.</title>
        <authorList>
            <person name="Suwa M."/>
            <person name="Sato T."/>
            <person name="Okouchi I."/>
            <person name="Arita M."/>
            <person name="Futami K."/>
            <person name="Matsumoto S."/>
            <person name="Tsutsumi S."/>
            <person name="Aburatani H."/>
            <person name="Asai K."/>
            <person name="Akiyama Y."/>
        </authorList>
    </citation>
    <scope>NUCLEOTIDE SEQUENCE [GENOMIC DNA]</scope>
</reference>
<reference key="2">
    <citation type="journal article" date="2004" name="Proc. Natl. Acad. Sci. U.S.A.">
        <title>The human olfactory receptor gene family.</title>
        <authorList>
            <person name="Malnic B."/>
            <person name="Godfrey P.A."/>
            <person name="Buck L.B."/>
        </authorList>
    </citation>
    <scope>IDENTIFICATION</scope>
</reference>
<reference key="3">
    <citation type="journal article" date="2004" name="Proc. Natl. Acad. Sci. U.S.A.">
        <authorList>
            <person name="Malnic B."/>
            <person name="Godfrey P.A."/>
            <person name="Buck L.B."/>
        </authorList>
    </citation>
    <scope>ERRATUM OF PUBMED:14983052</scope>
</reference>